<keyword id="KW-0067">ATP-binding</keyword>
<keyword id="KW-0131">Cell cycle</keyword>
<keyword id="KW-0132">Cell division</keyword>
<keyword id="KW-0133">Cell shape</keyword>
<keyword id="KW-0961">Cell wall biogenesis/degradation</keyword>
<keyword id="KW-0963">Cytoplasm</keyword>
<keyword id="KW-0436">Ligase</keyword>
<keyword id="KW-0547">Nucleotide-binding</keyword>
<keyword id="KW-0573">Peptidoglycan synthesis</keyword>
<name>MURD_CAUSK</name>
<gene>
    <name evidence="1" type="primary">murD</name>
    <name type="ordered locus">Caul_3669</name>
</gene>
<evidence type="ECO:0000255" key="1">
    <source>
        <dbReference type="HAMAP-Rule" id="MF_00639"/>
    </source>
</evidence>
<proteinExistence type="inferred from homology"/>
<reference key="1">
    <citation type="submission" date="2008-01" db="EMBL/GenBank/DDBJ databases">
        <title>Complete sequence of chromosome of Caulobacter sp. K31.</title>
        <authorList>
            <consortium name="US DOE Joint Genome Institute"/>
            <person name="Copeland A."/>
            <person name="Lucas S."/>
            <person name="Lapidus A."/>
            <person name="Barry K."/>
            <person name="Glavina del Rio T."/>
            <person name="Dalin E."/>
            <person name="Tice H."/>
            <person name="Pitluck S."/>
            <person name="Bruce D."/>
            <person name="Goodwin L."/>
            <person name="Thompson L.S."/>
            <person name="Brettin T."/>
            <person name="Detter J.C."/>
            <person name="Han C."/>
            <person name="Schmutz J."/>
            <person name="Larimer F."/>
            <person name="Land M."/>
            <person name="Hauser L."/>
            <person name="Kyrpides N."/>
            <person name="Kim E."/>
            <person name="Stephens C."/>
            <person name="Richardson P."/>
        </authorList>
    </citation>
    <scope>NUCLEOTIDE SEQUENCE [LARGE SCALE GENOMIC DNA]</scope>
    <source>
        <strain>K31</strain>
    </source>
</reference>
<comment type="function">
    <text evidence="1">Cell wall formation. Catalyzes the addition of glutamate to the nucleotide precursor UDP-N-acetylmuramoyl-L-alanine (UMA).</text>
</comment>
<comment type="catalytic activity">
    <reaction evidence="1">
        <text>UDP-N-acetyl-alpha-D-muramoyl-L-alanine + D-glutamate + ATP = UDP-N-acetyl-alpha-D-muramoyl-L-alanyl-D-glutamate + ADP + phosphate + H(+)</text>
        <dbReference type="Rhea" id="RHEA:16429"/>
        <dbReference type="ChEBI" id="CHEBI:15378"/>
        <dbReference type="ChEBI" id="CHEBI:29986"/>
        <dbReference type="ChEBI" id="CHEBI:30616"/>
        <dbReference type="ChEBI" id="CHEBI:43474"/>
        <dbReference type="ChEBI" id="CHEBI:83898"/>
        <dbReference type="ChEBI" id="CHEBI:83900"/>
        <dbReference type="ChEBI" id="CHEBI:456216"/>
        <dbReference type="EC" id="6.3.2.9"/>
    </reaction>
</comment>
<comment type="pathway">
    <text evidence="1">Cell wall biogenesis; peptidoglycan biosynthesis.</text>
</comment>
<comment type="subcellular location">
    <subcellularLocation>
        <location evidence="1">Cytoplasm</location>
    </subcellularLocation>
</comment>
<comment type="similarity">
    <text evidence="1">Belongs to the MurCDEF family.</text>
</comment>
<sequence length="469" mass="49294">MIPVRGFEGKTVAVFGLGRTGLTAARALIAGGAKVALWDEKPESRQAAVAEGLNVVDLTTSDWSDYAALMLSPGVPLTHPKPHWTVGKAKAAGVEVLGDIELFARTVNAAPEHKKPKIIAITGTNGKSTTTALIGHLCRQAGRDTRVGGNIGEGVLGLEDMHGGAVYVLELSSYQLDLTSSLKPDAVVLLNISPDHLDRHGGMDGYIAAKRRIFLNQGKGDTAIIGVDDPWCQQICTEITAANRRTIWPISAGKAMGRGVYALQGVLYDATGERVTEMADLLRARSLPGRHNWQNAAAAYAAAKAIGIPAHQAVDGLMSFPGLAHRMETVGKLGKVRFVNDSKATNADAARQAMSSYPKFYWIAGGVPKAGGIDDLVDLFPRVAGAYLIGQAAEDFGKTLEGKAPARQCGDIETAVAAAYADAVASGEEAVVLLSPACASFDQFADFEQRGEAFRAAVNGLGKPAAKRA</sequence>
<feature type="chain" id="PRO_1000082677" description="UDP-N-acetylmuramoylalanine--D-glutamate ligase">
    <location>
        <begin position="1"/>
        <end position="469"/>
    </location>
</feature>
<feature type="binding site" evidence="1">
    <location>
        <begin position="123"/>
        <end position="129"/>
    </location>
    <ligand>
        <name>ATP</name>
        <dbReference type="ChEBI" id="CHEBI:30616"/>
    </ligand>
</feature>
<accession>B0T833</accession>
<dbReference type="EC" id="6.3.2.9" evidence="1"/>
<dbReference type="EMBL" id="CP000927">
    <property type="protein sequence ID" value="ABZ72796.1"/>
    <property type="molecule type" value="Genomic_DNA"/>
</dbReference>
<dbReference type="SMR" id="B0T833"/>
<dbReference type="STRING" id="366602.Caul_3669"/>
<dbReference type="KEGG" id="cak:Caul_3669"/>
<dbReference type="eggNOG" id="COG0771">
    <property type="taxonomic scope" value="Bacteria"/>
</dbReference>
<dbReference type="HOGENOM" id="CLU_032540_3_0_5"/>
<dbReference type="OrthoDB" id="9809796at2"/>
<dbReference type="UniPathway" id="UPA00219"/>
<dbReference type="GO" id="GO:0005737">
    <property type="term" value="C:cytoplasm"/>
    <property type="evidence" value="ECO:0007669"/>
    <property type="project" value="UniProtKB-SubCell"/>
</dbReference>
<dbReference type="GO" id="GO:0005524">
    <property type="term" value="F:ATP binding"/>
    <property type="evidence" value="ECO:0007669"/>
    <property type="project" value="UniProtKB-UniRule"/>
</dbReference>
<dbReference type="GO" id="GO:0008764">
    <property type="term" value="F:UDP-N-acetylmuramoylalanine-D-glutamate ligase activity"/>
    <property type="evidence" value="ECO:0007669"/>
    <property type="project" value="UniProtKB-UniRule"/>
</dbReference>
<dbReference type="GO" id="GO:0051301">
    <property type="term" value="P:cell division"/>
    <property type="evidence" value="ECO:0007669"/>
    <property type="project" value="UniProtKB-KW"/>
</dbReference>
<dbReference type="GO" id="GO:0071555">
    <property type="term" value="P:cell wall organization"/>
    <property type="evidence" value="ECO:0007669"/>
    <property type="project" value="UniProtKB-KW"/>
</dbReference>
<dbReference type="GO" id="GO:0009252">
    <property type="term" value="P:peptidoglycan biosynthetic process"/>
    <property type="evidence" value="ECO:0007669"/>
    <property type="project" value="UniProtKB-UniRule"/>
</dbReference>
<dbReference type="GO" id="GO:0008360">
    <property type="term" value="P:regulation of cell shape"/>
    <property type="evidence" value="ECO:0007669"/>
    <property type="project" value="UniProtKB-KW"/>
</dbReference>
<dbReference type="Gene3D" id="3.90.190.20">
    <property type="entry name" value="Mur ligase, C-terminal domain"/>
    <property type="match status" value="1"/>
</dbReference>
<dbReference type="Gene3D" id="3.40.1190.10">
    <property type="entry name" value="Mur-like, catalytic domain"/>
    <property type="match status" value="1"/>
</dbReference>
<dbReference type="Gene3D" id="3.40.50.720">
    <property type="entry name" value="NAD(P)-binding Rossmann-like Domain"/>
    <property type="match status" value="1"/>
</dbReference>
<dbReference type="HAMAP" id="MF_00639">
    <property type="entry name" value="MurD"/>
    <property type="match status" value="1"/>
</dbReference>
<dbReference type="InterPro" id="IPR036565">
    <property type="entry name" value="Mur-like_cat_sf"/>
</dbReference>
<dbReference type="InterPro" id="IPR004101">
    <property type="entry name" value="Mur_ligase_C"/>
</dbReference>
<dbReference type="InterPro" id="IPR036615">
    <property type="entry name" value="Mur_ligase_C_dom_sf"/>
</dbReference>
<dbReference type="InterPro" id="IPR013221">
    <property type="entry name" value="Mur_ligase_cen"/>
</dbReference>
<dbReference type="InterPro" id="IPR005762">
    <property type="entry name" value="MurD"/>
</dbReference>
<dbReference type="NCBIfam" id="TIGR01087">
    <property type="entry name" value="murD"/>
    <property type="match status" value="1"/>
</dbReference>
<dbReference type="PANTHER" id="PTHR43692">
    <property type="entry name" value="UDP-N-ACETYLMURAMOYLALANINE--D-GLUTAMATE LIGASE"/>
    <property type="match status" value="1"/>
</dbReference>
<dbReference type="PANTHER" id="PTHR43692:SF1">
    <property type="entry name" value="UDP-N-ACETYLMURAMOYLALANINE--D-GLUTAMATE LIGASE"/>
    <property type="match status" value="1"/>
</dbReference>
<dbReference type="Pfam" id="PF02875">
    <property type="entry name" value="Mur_ligase_C"/>
    <property type="match status" value="1"/>
</dbReference>
<dbReference type="Pfam" id="PF08245">
    <property type="entry name" value="Mur_ligase_M"/>
    <property type="match status" value="1"/>
</dbReference>
<dbReference type="Pfam" id="PF21799">
    <property type="entry name" value="MurD-like_N"/>
    <property type="match status" value="1"/>
</dbReference>
<dbReference type="SUPFAM" id="SSF51984">
    <property type="entry name" value="MurCD N-terminal domain"/>
    <property type="match status" value="1"/>
</dbReference>
<dbReference type="SUPFAM" id="SSF53623">
    <property type="entry name" value="MurD-like peptide ligases, catalytic domain"/>
    <property type="match status" value="1"/>
</dbReference>
<dbReference type="SUPFAM" id="SSF53244">
    <property type="entry name" value="MurD-like peptide ligases, peptide-binding domain"/>
    <property type="match status" value="1"/>
</dbReference>
<organism>
    <name type="scientific">Caulobacter sp. (strain K31)</name>
    <dbReference type="NCBI Taxonomy" id="366602"/>
    <lineage>
        <taxon>Bacteria</taxon>
        <taxon>Pseudomonadati</taxon>
        <taxon>Pseudomonadota</taxon>
        <taxon>Alphaproteobacteria</taxon>
        <taxon>Caulobacterales</taxon>
        <taxon>Caulobacteraceae</taxon>
        <taxon>Caulobacter</taxon>
    </lineage>
</organism>
<protein>
    <recommendedName>
        <fullName evidence="1">UDP-N-acetylmuramoylalanine--D-glutamate ligase</fullName>
        <ecNumber evidence="1">6.3.2.9</ecNumber>
    </recommendedName>
    <alternativeName>
        <fullName evidence="1">D-glutamic acid-adding enzyme</fullName>
    </alternativeName>
    <alternativeName>
        <fullName evidence="1">UDP-N-acetylmuramoyl-L-alanyl-D-glutamate synthetase</fullName>
    </alternativeName>
</protein>